<protein>
    <recommendedName>
        <fullName>Protein phosphatase CheZ</fullName>
        <ecNumber>3.1.3.-</ecNumber>
    </recommendedName>
    <alternativeName>
        <fullName>Chemotaxis protein CheZ</fullName>
    </alternativeName>
</protein>
<reference key="1">
    <citation type="journal article" date="2003" name="Nat. Genet.">
        <title>Comparative analysis of the genome sequences of Bordetella pertussis, Bordetella parapertussis and Bordetella bronchiseptica.</title>
        <authorList>
            <person name="Parkhill J."/>
            <person name="Sebaihia M."/>
            <person name="Preston A."/>
            <person name="Murphy L.D."/>
            <person name="Thomson N.R."/>
            <person name="Harris D.E."/>
            <person name="Holden M.T.G."/>
            <person name="Churcher C.M."/>
            <person name="Bentley S.D."/>
            <person name="Mungall K.L."/>
            <person name="Cerdeno-Tarraga A.-M."/>
            <person name="Temple L."/>
            <person name="James K.D."/>
            <person name="Harris B."/>
            <person name="Quail M.A."/>
            <person name="Achtman M."/>
            <person name="Atkin R."/>
            <person name="Baker S."/>
            <person name="Basham D."/>
            <person name="Bason N."/>
            <person name="Cherevach I."/>
            <person name="Chillingworth T."/>
            <person name="Collins M."/>
            <person name="Cronin A."/>
            <person name="Davis P."/>
            <person name="Doggett J."/>
            <person name="Feltwell T."/>
            <person name="Goble A."/>
            <person name="Hamlin N."/>
            <person name="Hauser H."/>
            <person name="Holroyd S."/>
            <person name="Jagels K."/>
            <person name="Leather S."/>
            <person name="Moule S."/>
            <person name="Norberczak H."/>
            <person name="O'Neil S."/>
            <person name="Ormond D."/>
            <person name="Price C."/>
            <person name="Rabbinowitsch E."/>
            <person name="Rutter S."/>
            <person name="Sanders M."/>
            <person name="Saunders D."/>
            <person name="Seeger K."/>
            <person name="Sharp S."/>
            <person name="Simmonds M."/>
            <person name="Skelton J."/>
            <person name="Squares R."/>
            <person name="Squares S."/>
            <person name="Stevens K."/>
            <person name="Unwin L."/>
            <person name="Whitehead S."/>
            <person name="Barrell B.G."/>
            <person name="Maskell D.J."/>
        </authorList>
    </citation>
    <scope>NUCLEOTIDE SEQUENCE [LARGE SCALE GENOMIC DNA]</scope>
    <source>
        <strain>Tohama I / ATCC BAA-589 / NCTC 13251</strain>
    </source>
</reference>
<keyword id="KW-0145">Chemotaxis</keyword>
<keyword id="KW-0963">Cytoplasm</keyword>
<keyword id="KW-0283">Flagellar rotation</keyword>
<keyword id="KW-0378">Hydrolase</keyword>
<keyword id="KW-0904">Protein phosphatase</keyword>
<keyword id="KW-1185">Reference proteome</keyword>
<comment type="function">
    <text evidence="1">Plays an important role in bacterial chemotaxis signal transduction pathway by accelerating the dephosphorylation of phosphorylated CheY (CheY-P).</text>
</comment>
<comment type="subunit">
    <text evidence="1">Homodimer.</text>
</comment>
<comment type="subcellular location">
    <subcellularLocation>
        <location evidence="1">Cytoplasm</location>
    </subcellularLocation>
</comment>
<comment type="similarity">
    <text evidence="2">Belongs to the CheZ family.</text>
</comment>
<accession>Q7VZ92</accession>
<evidence type="ECO:0000250" key="1"/>
<evidence type="ECO:0000305" key="2"/>
<feature type="chain" id="PRO_0000410773" description="Protein phosphatase CheZ">
    <location>
        <begin position="1"/>
        <end position="210"/>
    </location>
</feature>
<feature type="site" description="Enhances dephosphorylation of CheY-P" evidence="1">
    <location>
        <position position="145"/>
    </location>
</feature>
<dbReference type="EC" id="3.1.3.-"/>
<dbReference type="EMBL" id="BX640414">
    <property type="protein sequence ID" value="CAE41334.1"/>
    <property type="molecule type" value="Genomic_DNA"/>
</dbReference>
<dbReference type="RefSeq" id="NP_879822.1">
    <property type="nucleotide sequence ID" value="NC_002929.2"/>
</dbReference>
<dbReference type="RefSeq" id="WP_003817162.1">
    <property type="nucleotide sequence ID" value="NZ_CP039022.1"/>
</dbReference>
<dbReference type="SMR" id="Q7VZ92"/>
<dbReference type="STRING" id="257313.BP1034"/>
<dbReference type="PaxDb" id="257313-BP1034"/>
<dbReference type="GeneID" id="69600957"/>
<dbReference type="KEGG" id="bpe:BP1034"/>
<dbReference type="PATRIC" id="fig|257313.5.peg.1105"/>
<dbReference type="eggNOG" id="COG3143">
    <property type="taxonomic scope" value="Bacteria"/>
</dbReference>
<dbReference type="HOGENOM" id="CLU_080718_1_0_4"/>
<dbReference type="Proteomes" id="UP000002676">
    <property type="component" value="Chromosome"/>
</dbReference>
<dbReference type="GO" id="GO:0009288">
    <property type="term" value="C:bacterial-type flagellum"/>
    <property type="evidence" value="ECO:0007669"/>
    <property type="project" value="InterPro"/>
</dbReference>
<dbReference type="GO" id="GO:0005737">
    <property type="term" value="C:cytoplasm"/>
    <property type="evidence" value="ECO:0007669"/>
    <property type="project" value="UniProtKB-SubCell"/>
</dbReference>
<dbReference type="GO" id="GO:0004721">
    <property type="term" value="F:phosphoprotein phosphatase activity"/>
    <property type="evidence" value="ECO:0007669"/>
    <property type="project" value="UniProtKB-KW"/>
</dbReference>
<dbReference type="GO" id="GO:0097588">
    <property type="term" value="P:archaeal or bacterial-type flagellum-dependent cell motility"/>
    <property type="evidence" value="ECO:0007669"/>
    <property type="project" value="UniProtKB-KW"/>
</dbReference>
<dbReference type="GO" id="GO:0006935">
    <property type="term" value="P:chemotaxis"/>
    <property type="evidence" value="ECO:0007669"/>
    <property type="project" value="UniProtKB-KW"/>
</dbReference>
<dbReference type="GO" id="GO:0050920">
    <property type="term" value="P:regulation of chemotaxis"/>
    <property type="evidence" value="ECO:0007669"/>
    <property type="project" value="InterPro"/>
</dbReference>
<dbReference type="Gene3D" id="1.10.287.500">
    <property type="entry name" value="Helix hairpin bin"/>
    <property type="match status" value="1"/>
</dbReference>
<dbReference type="Gene3D" id="1.20.5.590">
    <property type="entry name" value="Single helix bin"/>
    <property type="match status" value="1"/>
</dbReference>
<dbReference type="InterPro" id="IPR007439">
    <property type="entry name" value="Chemotax_Pase_CheZ"/>
</dbReference>
<dbReference type="InterPro" id="IPR050992">
    <property type="entry name" value="CheZ_family_phosphatases"/>
</dbReference>
<dbReference type="NCBIfam" id="NF008368">
    <property type="entry name" value="PRK11166.1"/>
    <property type="match status" value="1"/>
</dbReference>
<dbReference type="PANTHER" id="PTHR43693">
    <property type="entry name" value="PROTEIN PHOSPHATASE CHEZ"/>
    <property type="match status" value="1"/>
</dbReference>
<dbReference type="PANTHER" id="PTHR43693:SF1">
    <property type="entry name" value="PROTEIN PHOSPHATASE CHEZ"/>
    <property type="match status" value="1"/>
</dbReference>
<dbReference type="Pfam" id="PF04344">
    <property type="entry name" value="CheZ"/>
    <property type="match status" value="1"/>
</dbReference>
<dbReference type="PIRSF" id="PIRSF002884">
    <property type="entry name" value="CheZ"/>
    <property type="match status" value="1"/>
</dbReference>
<dbReference type="SUPFAM" id="SSF75708">
    <property type="entry name" value="Chemotaxis phosphatase CheZ"/>
    <property type="match status" value="1"/>
</dbReference>
<gene>
    <name type="primary">cheZ</name>
    <name type="ordered locus">BP1034</name>
</gene>
<sequence length="210" mass="23268">MNATDTGMQADPTDLIQRIASLTRMLRDSMRELGLDQAIKDAAEAIPDARDRLRYVAQMTEQAANRVLNATEAAGPIQDGMARGAQALDERWQQWYDQPLELPQARALVQDTRAFLAAVPQHTQQTQAKLMEIVMAQDFQDLTGQVIMRMMDVVGAIERELLQVLLDNVPQERRDEANSLLNGPQVNPGGKADVVTSQDQVDDLLASLGF</sequence>
<proteinExistence type="inferred from homology"/>
<name>CHEZ_BORPE</name>
<organism>
    <name type="scientific">Bordetella pertussis (strain Tohama I / ATCC BAA-589 / NCTC 13251)</name>
    <dbReference type="NCBI Taxonomy" id="257313"/>
    <lineage>
        <taxon>Bacteria</taxon>
        <taxon>Pseudomonadati</taxon>
        <taxon>Pseudomonadota</taxon>
        <taxon>Betaproteobacteria</taxon>
        <taxon>Burkholderiales</taxon>
        <taxon>Alcaligenaceae</taxon>
        <taxon>Bordetella</taxon>
    </lineage>
</organism>